<sequence>MDIRVYNTLSGKKEPLQPIEPNHVKLYVCGITSYDYCHIGHARSALAFDMIVRYLRYLDYKVTFVRNFTDIDDKIIARANETGVTAQALAERFIDEFHTDMDNLGTLRPDIEPKATEHIQEMIDIIQELVDKDMAYPSAGDVYYVVNSFPEYGKLSGRNIEDMQAGARISINEQKRNPMDFALWKASKPGEPSWESPWGPGRPGWHIECSAMSRKYLGENFDIHGGGKDLIFPHHENEIAQSEGANGKPFANTWIHHGFVTIKDEKMSKSLGNFLTIKDILDHYHPEILRAFIFSTQYRNPLDFSEIAMQDAETALVRLYECLHDIQQLAKGDPTLPALISAKDAAKLNSIETRFQEAMNNDFNTALALGVLYDAIKIINRAQRALTDTPSALDVKMLKGSMTLIQKLAGIVGLLQEDANLFLQQRKEKMLSGIDITEAEIESYIQQRLDARANKDWARSDEIRDILLEKGITLKDGADGTGWSVHRAN</sequence>
<feature type="chain" id="PRO_0000159392" description="Cysteine--tRNA ligase">
    <location>
        <begin position="1"/>
        <end position="489"/>
    </location>
</feature>
<feature type="short sequence motif" description="'HIGH' region">
    <location>
        <begin position="31"/>
        <end position="41"/>
    </location>
</feature>
<feature type="short sequence motif" description="'KMSKS' region">
    <location>
        <begin position="266"/>
        <end position="270"/>
    </location>
</feature>
<feature type="binding site" evidence="1">
    <location>
        <position position="29"/>
    </location>
    <ligand>
        <name>Zn(2+)</name>
        <dbReference type="ChEBI" id="CHEBI:29105"/>
    </ligand>
</feature>
<feature type="binding site" evidence="1">
    <location>
        <position position="209"/>
    </location>
    <ligand>
        <name>Zn(2+)</name>
        <dbReference type="ChEBI" id="CHEBI:29105"/>
    </ligand>
</feature>
<feature type="binding site" evidence="1">
    <location>
        <position position="234"/>
    </location>
    <ligand>
        <name>Zn(2+)</name>
        <dbReference type="ChEBI" id="CHEBI:29105"/>
    </ligand>
</feature>
<feature type="binding site" evidence="1">
    <location>
        <position position="238"/>
    </location>
    <ligand>
        <name>Zn(2+)</name>
        <dbReference type="ChEBI" id="CHEBI:29105"/>
    </ligand>
</feature>
<feature type="binding site" evidence="1">
    <location>
        <position position="269"/>
    </location>
    <ligand>
        <name>ATP</name>
        <dbReference type="ChEBI" id="CHEBI:30616"/>
    </ligand>
</feature>
<comment type="catalytic activity">
    <reaction evidence="1">
        <text>tRNA(Cys) + L-cysteine + ATP = L-cysteinyl-tRNA(Cys) + AMP + diphosphate</text>
        <dbReference type="Rhea" id="RHEA:17773"/>
        <dbReference type="Rhea" id="RHEA-COMP:9661"/>
        <dbReference type="Rhea" id="RHEA-COMP:9679"/>
        <dbReference type="ChEBI" id="CHEBI:30616"/>
        <dbReference type="ChEBI" id="CHEBI:33019"/>
        <dbReference type="ChEBI" id="CHEBI:35235"/>
        <dbReference type="ChEBI" id="CHEBI:78442"/>
        <dbReference type="ChEBI" id="CHEBI:78517"/>
        <dbReference type="ChEBI" id="CHEBI:456215"/>
        <dbReference type="EC" id="6.1.1.16"/>
    </reaction>
</comment>
<comment type="cofactor">
    <cofactor evidence="1">
        <name>Zn(2+)</name>
        <dbReference type="ChEBI" id="CHEBI:29105"/>
    </cofactor>
    <text evidence="1">Binds 1 zinc ion per subunit.</text>
</comment>
<comment type="subunit">
    <text evidence="1">Monomer.</text>
</comment>
<comment type="subcellular location">
    <subcellularLocation>
        <location evidence="1">Cytoplasm</location>
    </subcellularLocation>
</comment>
<comment type="similarity">
    <text evidence="1">Belongs to the class-I aminoacyl-tRNA synthetase family.</text>
</comment>
<gene>
    <name evidence="1" type="primary">cysS</name>
    <name type="ordered locus">DP2928</name>
</gene>
<proteinExistence type="inferred from homology"/>
<organism>
    <name type="scientific">Desulfotalea psychrophila (strain LSv54 / DSM 12343)</name>
    <dbReference type="NCBI Taxonomy" id="177439"/>
    <lineage>
        <taxon>Bacteria</taxon>
        <taxon>Pseudomonadati</taxon>
        <taxon>Thermodesulfobacteriota</taxon>
        <taxon>Desulfobulbia</taxon>
        <taxon>Desulfobulbales</taxon>
        <taxon>Desulfocapsaceae</taxon>
        <taxon>Desulfotalea</taxon>
    </lineage>
</organism>
<reference key="1">
    <citation type="journal article" date="2004" name="Environ. Microbiol.">
        <title>The genome of Desulfotalea psychrophila, a sulfate-reducing bacterium from permanently cold Arctic sediments.</title>
        <authorList>
            <person name="Rabus R."/>
            <person name="Ruepp A."/>
            <person name="Frickey T."/>
            <person name="Rattei T."/>
            <person name="Fartmann B."/>
            <person name="Stark M."/>
            <person name="Bauer M."/>
            <person name="Zibat A."/>
            <person name="Lombardot T."/>
            <person name="Becker I."/>
            <person name="Amann J."/>
            <person name="Gellner K."/>
            <person name="Teeling H."/>
            <person name="Leuschner W.D."/>
            <person name="Gloeckner F.-O."/>
            <person name="Lupas A.N."/>
            <person name="Amann R."/>
            <person name="Klenk H.-P."/>
        </authorList>
    </citation>
    <scope>NUCLEOTIDE SEQUENCE [LARGE SCALE GENOMIC DNA]</scope>
    <source>
        <strain>DSM 12343 / LSv54</strain>
    </source>
</reference>
<accession>Q6AJ23</accession>
<name>SYC_DESPS</name>
<protein>
    <recommendedName>
        <fullName evidence="1">Cysteine--tRNA ligase</fullName>
        <ecNumber evidence="1">6.1.1.16</ecNumber>
    </recommendedName>
    <alternativeName>
        <fullName evidence="1">Cysteinyl-tRNA synthetase</fullName>
        <shortName evidence="1">CysRS</shortName>
    </alternativeName>
</protein>
<keyword id="KW-0030">Aminoacyl-tRNA synthetase</keyword>
<keyword id="KW-0067">ATP-binding</keyword>
<keyword id="KW-0963">Cytoplasm</keyword>
<keyword id="KW-0436">Ligase</keyword>
<keyword id="KW-0479">Metal-binding</keyword>
<keyword id="KW-0547">Nucleotide-binding</keyword>
<keyword id="KW-0648">Protein biosynthesis</keyword>
<keyword id="KW-1185">Reference proteome</keyword>
<keyword id="KW-0862">Zinc</keyword>
<dbReference type="EC" id="6.1.1.16" evidence="1"/>
<dbReference type="EMBL" id="CR522870">
    <property type="protein sequence ID" value="CAG37657.1"/>
    <property type="molecule type" value="Genomic_DNA"/>
</dbReference>
<dbReference type="RefSeq" id="WP_011190169.1">
    <property type="nucleotide sequence ID" value="NC_006138.1"/>
</dbReference>
<dbReference type="SMR" id="Q6AJ23"/>
<dbReference type="STRING" id="177439.DP2928"/>
<dbReference type="KEGG" id="dps:DP2928"/>
<dbReference type="eggNOG" id="COG0215">
    <property type="taxonomic scope" value="Bacteria"/>
</dbReference>
<dbReference type="HOGENOM" id="CLU_013528_0_1_7"/>
<dbReference type="OrthoDB" id="9815130at2"/>
<dbReference type="Proteomes" id="UP000000602">
    <property type="component" value="Chromosome"/>
</dbReference>
<dbReference type="GO" id="GO:0005829">
    <property type="term" value="C:cytosol"/>
    <property type="evidence" value="ECO:0007669"/>
    <property type="project" value="TreeGrafter"/>
</dbReference>
<dbReference type="GO" id="GO:0005524">
    <property type="term" value="F:ATP binding"/>
    <property type="evidence" value="ECO:0007669"/>
    <property type="project" value="UniProtKB-UniRule"/>
</dbReference>
<dbReference type="GO" id="GO:0004817">
    <property type="term" value="F:cysteine-tRNA ligase activity"/>
    <property type="evidence" value="ECO:0007669"/>
    <property type="project" value="UniProtKB-UniRule"/>
</dbReference>
<dbReference type="GO" id="GO:0008270">
    <property type="term" value="F:zinc ion binding"/>
    <property type="evidence" value="ECO:0007669"/>
    <property type="project" value="UniProtKB-UniRule"/>
</dbReference>
<dbReference type="GO" id="GO:0006423">
    <property type="term" value="P:cysteinyl-tRNA aminoacylation"/>
    <property type="evidence" value="ECO:0007669"/>
    <property type="project" value="UniProtKB-UniRule"/>
</dbReference>
<dbReference type="CDD" id="cd07963">
    <property type="entry name" value="Anticodon_Ia_Cys"/>
    <property type="match status" value="1"/>
</dbReference>
<dbReference type="CDD" id="cd00672">
    <property type="entry name" value="CysRS_core"/>
    <property type="match status" value="1"/>
</dbReference>
<dbReference type="FunFam" id="3.40.50.620:FF:000009">
    <property type="entry name" value="Cysteine--tRNA ligase"/>
    <property type="match status" value="1"/>
</dbReference>
<dbReference type="Gene3D" id="1.20.120.1910">
    <property type="entry name" value="Cysteine-tRNA ligase, C-terminal anti-codon recognition domain"/>
    <property type="match status" value="1"/>
</dbReference>
<dbReference type="Gene3D" id="3.40.50.620">
    <property type="entry name" value="HUPs"/>
    <property type="match status" value="1"/>
</dbReference>
<dbReference type="HAMAP" id="MF_00041">
    <property type="entry name" value="Cys_tRNA_synth"/>
    <property type="match status" value="1"/>
</dbReference>
<dbReference type="InterPro" id="IPR015803">
    <property type="entry name" value="Cys-tRNA-ligase"/>
</dbReference>
<dbReference type="InterPro" id="IPR015273">
    <property type="entry name" value="Cys-tRNA-synt_Ia_DALR"/>
</dbReference>
<dbReference type="InterPro" id="IPR024909">
    <property type="entry name" value="Cys-tRNA/MSH_ligase"/>
</dbReference>
<dbReference type="InterPro" id="IPR014729">
    <property type="entry name" value="Rossmann-like_a/b/a_fold"/>
</dbReference>
<dbReference type="InterPro" id="IPR032678">
    <property type="entry name" value="tRNA-synt_1_cat_dom"/>
</dbReference>
<dbReference type="InterPro" id="IPR009080">
    <property type="entry name" value="tRNAsynth_Ia_anticodon-bd"/>
</dbReference>
<dbReference type="NCBIfam" id="TIGR00435">
    <property type="entry name" value="cysS"/>
    <property type="match status" value="1"/>
</dbReference>
<dbReference type="PANTHER" id="PTHR10890:SF3">
    <property type="entry name" value="CYSTEINE--TRNA LIGASE, CYTOPLASMIC"/>
    <property type="match status" value="1"/>
</dbReference>
<dbReference type="PANTHER" id="PTHR10890">
    <property type="entry name" value="CYSTEINYL-TRNA SYNTHETASE"/>
    <property type="match status" value="1"/>
</dbReference>
<dbReference type="Pfam" id="PF09190">
    <property type="entry name" value="DALR_2"/>
    <property type="match status" value="1"/>
</dbReference>
<dbReference type="Pfam" id="PF01406">
    <property type="entry name" value="tRNA-synt_1e"/>
    <property type="match status" value="1"/>
</dbReference>
<dbReference type="PRINTS" id="PR00983">
    <property type="entry name" value="TRNASYNTHCYS"/>
</dbReference>
<dbReference type="SMART" id="SM00840">
    <property type="entry name" value="DALR_2"/>
    <property type="match status" value="1"/>
</dbReference>
<dbReference type="SUPFAM" id="SSF47323">
    <property type="entry name" value="Anticodon-binding domain of a subclass of class I aminoacyl-tRNA synthetases"/>
    <property type="match status" value="1"/>
</dbReference>
<dbReference type="SUPFAM" id="SSF52374">
    <property type="entry name" value="Nucleotidylyl transferase"/>
    <property type="match status" value="1"/>
</dbReference>
<evidence type="ECO:0000255" key="1">
    <source>
        <dbReference type="HAMAP-Rule" id="MF_00041"/>
    </source>
</evidence>